<name>PXCA_PROMM</name>
<dbReference type="EMBL" id="BX548175">
    <property type="protein sequence ID" value="CAE20923.1"/>
    <property type="molecule type" value="Genomic_DNA"/>
</dbReference>
<dbReference type="RefSeq" id="WP_011130126.1">
    <property type="nucleotide sequence ID" value="NC_005071.1"/>
</dbReference>
<dbReference type="KEGG" id="pmt:PMT_0748"/>
<dbReference type="eggNOG" id="ENOG502Z8DN">
    <property type="taxonomic scope" value="Bacteria"/>
</dbReference>
<dbReference type="HOGENOM" id="CLU_690401_0_0_3"/>
<dbReference type="OrthoDB" id="418298at2"/>
<dbReference type="Proteomes" id="UP000001423">
    <property type="component" value="Chromosome"/>
</dbReference>
<dbReference type="GO" id="GO:0005886">
    <property type="term" value="C:plasma membrane"/>
    <property type="evidence" value="ECO:0007669"/>
    <property type="project" value="UniProtKB-SubCell"/>
</dbReference>
<dbReference type="GO" id="GO:0015078">
    <property type="term" value="F:proton transmembrane transporter activity"/>
    <property type="evidence" value="ECO:0007669"/>
    <property type="project" value="UniProtKB-UniRule"/>
</dbReference>
<dbReference type="HAMAP" id="MF_01308">
    <property type="entry name" value="CemA_PxcA"/>
    <property type="match status" value="1"/>
</dbReference>
<dbReference type="InterPro" id="IPR004282">
    <property type="entry name" value="CemA"/>
</dbReference>
<dbReference type="NCBIfam" id="NF002705">
    <property type="entry name" value="PRK02507.1-4"/>
    <property type="match status" value="1"/>
</dbReference>
<dbReference type="PANTHER" id="PTHR33650:SF2">
    <property type="entry name" value="CHLOROPLAST ENVELOPE MEMBRANE PROTEIN"/>
    <property type="match status" value="1"/>
</dbReference>
<dbReference type="PANTHER" id="PTHR33650">
    <property type="entry name" value="CHLOROPLAST ENVELOPE MEMBRANE PROTEIN-RELATED"/>
    <property type="match status" value="1"/>
</dbReference>
<dbReference type="Pfam" id="PF03040">
    <property type="entry name" value="CemA"/>
    <property type="match status" value="1"/>
</dbReference>
<accession>Q7V7J6</accession>
<gene>
    <name evidence="1" type="primary">pxcA</name>
    <name type="ordered locus">PMT_0748</name>
</gene>
<evidence type="ECO:0000255" key="1">
    <source>
        <dbReference type="HAMAP-Rule" id="MF_01308"/>
    </source>
</evidence>
<sequence>MTLRDWMRTFGEARSIDINNDLERGYEAALLIQTLELEYYGDRPIRPNLQLSVPRSLQSTILRKFHTAANICRLTFEAIKPNVSQLDSQEYRKYQLIETIVNRYAPKRSSRSTSISRAPDALPRSLLGLVDKVRRQLDPTSEATLVAGFRRRRDSTLISLKIILLLILVPLLVQQISRTYLITPAIDYLAPELPFLSYPKPQLEEQAVEKLRVFKAEIEFDALLKGDSIPSQDELQKALAIKAIQLKDEADKESTHAIKNVLADLAALIAFAFVCIINREELRVLRGFLDEAIYGLSDSAKAFAIILFTDMFVGFHSPEGWQVLLQGIANHFGFPARENFILLFIATFPVILATIFKYWIFRYLNRVSPSSVATLRGMNGSS</sequence>
<protein>
    <recommendedName>
        <fullName evidence="1">Proton extrusion protein PxcA</fullName>
    </recommendedName>
</protein>
<feature type="chain" id="PRO_0000293497" description="Proton extrusion protein PxcA">
    <location>
        <begin position="1"/>
        <end position="382"/>
    </location>
</feature>
<feature type="transmembrane region" description="Helical" evidence="1">
    <location>
        <begin position="156"/>
        <end position="176"/>
    </location>
</feature>
<feature type="transmembrane region" description="Helical" evidence="1">
    <location>
        <begin position="257"/>
        <end position="277"/>
    </location>
</feature>
<feature type="transmembrane region" description="Helical" evidence="1">
    <location>
        <begin position="305"/>
        <end position="325"/>
    </location>
</feature>
<feature type="transmembrane region" description="Helical" evidence="1">
    <location>
        <begin position="340"/>
        <end position="360"/>
    </location>
</feature>
<organism>
    <name type="scientific">Prochlorococcus marinus (strain MIT 9313)</name>
    <dbReference type="NCBI Taxonomy" id="74547"/>
    <lineage>
        <taxon>Bacteria</taxon>
        <taxon>Bacillati</taxon>
        <taxon>Cyanobacteriota</taxon>
        <taxon>Cyanophyceae</taxon>
        <taxon>Synechococcales</taxon>
        <taxon>Prochlorococcaceae</taxon>
        <taxon>Prochlorococcus</taxon>
    </lineage>
</organism>
<keyword id="KW-0997">Cell inner membrane</keyword>
<keyword id="KW-1003">Cell membrane</keyword>
<keyword id="KW-0375">Hydrogen ion transport</keyword>
<keyword id="KW-0406">Ion transport</keyword>
<keyword id="KW-0472">Membrane</keyword>
<keyword id="KW-1185">Reference proteome</keyword>
<keyword id="KW-0812">Transmembrane</keyword>
<keyword id="KW-1133">Transmembrane helix</keyword>
<keyword id="KW-0813">Transport</keyword>
<proteinExistence type="inferred from homology"/>
<comment type="function">
    <text evidence="1">Required for H(+) efflux immediately after light irradiation to form a rapid H(+) concentration gradient across the thylakoid membranes. Together with PxcL, contributes to transient H(+) uptake following dark to light transition.</text>
</comment>
<comment type="subcellular location">
    <subcellularLocation>
        <location evidence="1">Cell inner membrane</location>
        <topology evidence="1">Multi-pass membrane protein</topology>
    </subcellularLocation>
</comment>
<comment type="similarity">
    <text evidence="1">Belongs to the CemA family.</text>
</comment>
<reference key="1">
    <citation type="journal article" date="2003" name="Nature">
        <title>Genome divergence in two Prochlorococcus ecotypes reflects oceanic niche differentiation.</title>
        <authorList>
            <person name="Rocap G."/>
            <person name="Larimer F.W."/>
            <person name="Lamerdin J.E."/>
            <person name="Malfatti S."/>
            <person name="Chain P."/>
            <person name="Ahlgren N.A."/>
            <person name="Arellano A."/>
            <person name="Coleman M."/>
            <person name="Hauser L."/>
            <person name="Hess W.R."/>
            <person name="Johnson Z.I."/>
            <person name="Land M.L."/>
            <person name="Lindell D."/>
            <person name="Post A.F."/>
            <person name="Regala W."/>
            <person name="Shah M."/>
            <person name="Shaw S.L."/>
            <person name="Steglich C."/>
            <person name="Sullivan M.B."/>
            <person name="Ting C.S."/>
            <person name="Tolonen A."/>
            <person name="Webb E.A."/>
            <person name="Zinser E.R."/>
            <person name="Chisholm S.W."/>
        </authorList>
    </citation>
    <scope>NUCLEOTIDE SEQUENCE [LARGE SCALE GENOMIC DNA]</scope>
    <source>
        <strain>MIT 9313</strain>
    </source>
</reference>